<accession>Q04A23</accession>
<gene>
    <name evidence="1" type="primary">glyS</name>
    <name type="ordered locus">LBUL_1166</name>
</gene>
<reference key="1">
    <citation type="journal article" date="2006" name="Proc. Natl. Acad. Sci. U.S.A.">
        <title>Comparative genomics of the lactic acid bacteria.</title>
        <authorList>
            <person name="Makarova K.S."/>
            <person name="Slesarev A."/>
            <person name="Wolf Y.I."/>
            <person name="Sorokin A."/>
            <person name="Mirkin B."/>
            <person name="Koonin E.V."/>
            <person name="Pavlov A."/>
            <person name="Pavlova N."/>
            <person name="Karamychev V."/>
            <person name="Polouchine N."/>
            <person name="Shakhova V."/>
            <person name="Grigoriev I."/>
            <person name="Lou Y."/>
            <person name="Rohksar D."/>
            <person name="Lucas S."/>
            <person name="Huang K."/>
            <person name="Goodstein D.M."/>
            <person name="Hawkins T."/>
            <person name="Plengvidhya V."/>
            <person name="Welker D."/>
            <person name="Hughes J."/>
            <person name="Goh Y."/>
            <person name="Benson A."/>
            <person name="Baldwin K."/>
            <person name="Lee J.-H."/>
            <person name="Diaz-Muniz I."/>
            <person name="Dosti B."/>
            <person name="Smeianov V."/>
            <person name="Wechter W."/>
            <person name="Barabote R."/>
            <person name="Lorca G."/>
            <person name="Altermann E."/>
            <person name="Barrangou R."/>
            <person name="Ganesan B."/>
            <person name="Xie Y."/>
            <person name="Rawsthorne H."/>
            <person name="Tamir D."/>
            <person name="Parker C."/>
            <person name="Breidt F."/>
            <person name="Broadbent J.R."/>
            <person name="Hutkins R."/>
            <person name="O'Sullivan D."/>
            <person name="Steele J."/>
            <person name="Unlu G."/>
            <person name="Saier M.H. Jr."/>
            <person name="Klaenhammer T."/>
            <person name="Richardson P."/>
            <person name="Kozyavkin S."/>
            <person name="Weimer B.C."/>
            <person name="Mills D.A."/>
        </authorList>
    </citation>
    <scope>NUCLEOTIDE SEQUENCE [LARGE SCALE GENOMIC DNA]</scope>
    <source>
        <strain>ATCC BAA-365 / Lb-18</strain>
    </source>
</reference>
<comment type="catalytic activity">
    <reaction evidence="1">
        <text>tRNA(Gly) + glycine + ATP = glycyl-tRNA(Gly) + AMP + diphosphate</text>
        <dbReference type="Rhea" id="RHEA:16013"/>
        <dbReference type="Rhea" id="RHEA-COMP:9664"/>
        <dbReference type="Rhea" id="RHEA-COMP:9683"/>
        <dbReference type="ChEBI" id="CHEBI:30616"/>
        <dbReference type="ChEBI" id="CHEBI:33019"/>
        <dbReference type="ChEBI" id="CHEBI:57305"/>
        <dbReference type="ChEBI" id="CHEBI:78442"/>
        <dbReference type="ChEBI" id="CHEBI:78522"/>
        <dbReference type="ChEBI" id="CHEBI:456215"/>
        <dbReference type="EC" id="6.1.1.14"/>
    </reaction>
</comment>
<comment type="subunit">
    <text evidence="1">Tetramer of two alpha and two beta subunits.</text>
</comment>
<comment type="subcellular location">
    <subcellularLocation>
        <location evidence="1">Cytoplasm</location>
    </subcellularLocation>
</comment>
<comment type="similarity">
    <text evidence="1">Belongs to the class-II aminoacyl-tRNA synthetase family.</text>
</comment>
<protein>
    <recommendedName>
        <fullName evidence="1">Glycine--tRNA ligase beta subunit</fullName>
        <ecNumber evidence="1">6.1.1.14</ecNumber>
    </recommendedName>
    <alternativeName>
        <fullName evidence="1">Glycyl-tRNA synthetase beta subunit</fullName>
        <shortName evidence="1">GlyRS</shortName>
    </alternativeName>
</protein>
<dbReference type="EC" id="6.1.1.14" evidence="1"/>
<dbReference type="EMBL" id="CP000412">
    <property type="protein sequence ID" value="ABJ58699.1"/>
    <property type="molecule type" value="Genomic_DNA"/>
</dbReference>
<dbReference type="RefSeq" id="WP_011678360.1">
    <property type="nucleotide sequence ID" value="NC_008529.1"/>
</dbReference>
<dbReference type="SMR" id="Q04A23"/>
<dbReference type="KEGG" id="lbu:LBUL_1166"/>
<dbReference type="HOGENOM" id="CLU_007220_2_2_9"/>
<dbReference type="BioCyc" id="LDEL321956:LBUL_RS05455-MONOMER"/>
<dbReference type="GO" id="GO:0005829">
    <property type="term" value="C:cytosol"/>
    <property type="evidence" value="ECO:0007669"/>
    <property type="project" value="TreeGrafter"/>
</dbReference>
<dbReference type="GO" id="GO:0005524">
    <property type="term" value="F:ATP binding"/>
    <property type="evidence" value="ECO:0007669"/>
    <property type="project" value="UniProtKB-UniRule"/>
</dbReference>
<dbReference type="GO" id="GO:0004820">
    <property type="term" value="F:glycine-tRNA ligase activity"/>
    <property type="evidence" value="ECO:0007669"/>
    <property type="project" value="UniProtKB-UniRule"/>
</dbReference>
<dbReference type="GO" id="GO:0006426">
    <property type="term" value="P:glycyl-tRNA aminoacylation"/>
    <property type="evidence" value="ECO:0007669"/>
    <property type="project" value="UniProtKB-UniRule"/>
</dbReference>
<dbReference type="HAMAP" id="MF_00255">
    <property type="entry name" value="Gly_tRNA_synth_beta"/>
    <property type="match status" value="1"/>
</dbReference>
<dbReference type="InterPro" id="IPR015944">
    <property type="entry name" value="Gly-tRNA-synth_bsu"/>
</dbReference>
<dbReference type="InterPro" id="IPR006194">
    <property type="entry name" value="Gly-tRNA-synth_heterodimer"/>
</dbReference>
<dbReference type="NCBIfam" id="TIGR00211">
    <property type="entry name" value="glyS"/>
    <property type="match status" value="1"/>
</dbReference>
<dbReference type="PANTHER" id="PTHR30075:SF2">
    <property type="entry name" value="GLYCINE--TRNA LIGASE, CHLOROPLASTIC_MITOCHONDRIAL 2"/>
    <property type="match status" value="1"/>
</dbReference>
<dbReference type="PANTHER" id="PTHR30075">
    <property type="entry name" value="GLYCYL-TRNA SYNTHETASE"/>
    <property type="match status" value="1"/>
</dbReference>
<dbReference type="Pfam" id="PF02092">
    <property type="entry name" value="tRNA_synt_2f"/>
    <property type="match status" value="1"/>
</dbReference>
<dbReference type="PRINTS" id="PR01045">
    <property type="entry name" value="TRNASYNTHGB"/>
</dbReference>
<dbReference type="SUPFAM" id="SSF109604">
    <property type="entry name" value="HD-domain/PDEase-like"/>
    <property type="match status" value="1"/>
</dbReference>
<dbReference type="PROSITE" id="PS50861">
    <property type="entry name" value="AA_TRNA_LIGASE_II_GLYAB"/>
    <property type="match status" value="1"/>
</dbReference>
<keyword id="KW-0030">Aminoacyl-tRNA synthetase</keyword>
<keyword id="KW-0067">ATP-binding</keyword>
<keyword id="KW-0963">Cytoplasm</keyword>
<keyword id="KW-0436">Ligase</keyword>
<keyword id="KW-0547">Nucleotide-binding</keyword>
<keyword id="KW-0648">Protein biosynthesis</keyword>
<evidence type="ECO:0000255" key="1">
    <source>
        <dbReference type="HAMAP-Rule" id="MF_00255"/>
    </source>
</evidence>
<organism>
    <name type="scientific">Lactobacillus delbrueckii subsp. bulgaricus (strain ATCC BAA-365 / Lb-18)</name>
    <dbReference type="NCBI Taxonomy" id="321956"/>
    <lineage>
        <taxon>Bacteria</taxon>
        <taxon>Bacillati</taxon>
        <taxon>Bacillota</taxon>
        <taxon>Bacilli</taxon>
        <taxon>Lactobacillales</taxon>
        <taxon>Lactobacillaceae</taxon>
        <taxon>Lactobacillus</taxon>
    </lineage>
</organism>
<feature type="chain" id="PRO_1000006372" description="Glycine--tRNA ligase beta subunit">
    <location>
        <begin position="1"/>
        <end position="688"/>
    </location>
</feature>
<sequence>MTKDFLFEIGVEEMPAHVVSKSVKQLADRTGKFLKENGLGFKEIKTYSTPRRLTVLVKELDEKQADVDEVKKGPAKKIAQDADGNWTKAAVGFARGQGMSADDIYFEELKGVEYAYVHVQKAGKEAKEILLGLDEVIKAMTFPTKMRWDSQDFEFVRPIHWLVALYGSEVVPVEFLDITAGRKTAGHRFLGDSVVLANADDYVEALRDQYVIVDADERKAMIVSQINDLVNSHNWQIKLDASLLEEVNNLVEYPTVFAGSFDQKYLEIPDEVLITSMKDNQRYFEVYDQEGKLINCFISVRNGNKDHLENVISGNEKVLVARLDDAVFFYDEDRKYPISHFVDRMDSVSFHDKIGSMAEKMTRVRIIGDYLAKRFGLSAEEVADFDRVSGLYKFDLVTQMVGEFAELQGVMGMHYACLAGENENVSVAIKEHYMPTTAEGDLPKTKVGALLSVADKLDTIIAFFGAGMIPSSSNDPYALRRYAYGIVRILLNEDWSLPFDQVVPEIVELLSGKTPAKLPQGAEEDKQLADFIRDRIKQFLQKNNYQYDVIDAVLASSEQDPSQILAAAKVLQQHHDDEAFKPVVESLTRIANILKKAKFSQASPVDPSLFEDRSEQDLYDGVEALANVKDHAELYEAFVALQGVIDRYFDVNMIMAKDEAVKNNRLSQLAAVNDLAKRLGDLSKLVIK</sequence>
<name>SYGB_LACDB</name>
<proteinExistence type="inferred from homology"/>